<accession>Q5FPX3</accession>
<gene>
    <name evidence="1" type="primary">truA</name>
    <name type="ordered locus">GOX1834</name>
</gene>
<name>TRUA_GLUOX</name>
<proteinExistence type="inferred from homology"/>
<comment type="function">
    <text evidence="1">Formation of pseudouridine at positions 38, 39 and 40 in the anticodon stem and loop of transfer RNAs.</text>
</comment>
<comment type="catalytic activity">
    <reaction evidence="1">
        <text>uridine(38/39/40) in tRNA = pseudouridine(38/39/40) in tRNA</text>
        <dbReference type="Rhea" id="RHEA:22376"/>
        <dbReference type="Rhea" id="RHEA-COMP:10085"/>
        <dbReference type="Rhea" id="RHEA-COMP:10087"/>
        <dbReference type="ChEBI" id="CHEBI:65314"/>
        <dbReference type="ChEBI" id="CHEBI:65315"/>
        <dbReference type="EC" id="5.4.99.12"/>
    </reaction>
</comment>
<comment type="subunit">
    <text evidence="1">Homodimer.</text>
</comment>
<comment type="similarity">
    <text evidence="1">Belongs to the tRNA pseudouridine synthase TruA family.</text>
</comment>
<protein>
    <recommendedName>
        <fullName evidence="1">tRNA pseudouridine synthase A</fullName>
        <ecNumber evidence="1">5.4.99.12</ecNumber>
    </recommendedName>
    <alternativeName>
        <fullName evidence="1">tRNA pseudouridine(38-40) synthase</fullName>
    </alternativeName>
    <alternativeName>
        <fullName evidence="1">tRNA pseudouridylate synthase I</fullName>
    </alternativeName>
    <alternativeName>
        <fullName evidence="1">tRNA-uridine isomerase I</fullName>
    </alternativeName>
</protein>
<dbReference type="EC" id="5.4.99.12" evidence="1"/>
<dbReference type="EMBL" id="CP000009">
    <property type="protein sequence ID" value="AAW61573.1"/>
    <property type="molecule type" value="Genomic_DNA"/>
</dbReference>
<dbReference type="SMR" id="Q5FPX3"/>
<dbReference type="STRING" id="290633.GOX1834"/>
<dbReference type="KEGG" id="gox:GOX1834"/>
<dbReference type="eggNOG" id="COG0101">
    <property type="taxonomic scope" value="Bacteria"/>
</dbReference>
<dbReference type="HOGENOM" id="CLU_014673_0_2_5"/>
<dbReference type="Proteomes" id="UP000006375">
    <property type="component" value="Chromosome"/>
</dbReference>
<dbReference type="GO" id="GO:0003723">
    <property type="term" value="F:RNA binding"/>
    <property type="evidence" value="ECO:0007669"/>
    <property type="project" value="InterPro"/>
</dbReference>
<dbReference type="GO" id="GO:0160147">
    <property type="term" value="F:tRNA pseudouridine(38-40) synthase activity"/>
    <property type="evidence" value="ECO:0007669"/>
    <property type="project" value="UniProtKB-EC"/>
</dbReference>
<dbReference type="GO" id="GO:0031119">
    <property type="term" value="P:tRNA pseudouridine synthesis"/>
    <property type="evidence" value="ECO:0007669"/>
    <property type="project" value="UniProtKB-UniRule"/>
</dbReference>
<dbReference type="CDD" id="cd02570">
    <property type="entry name" value="PseudoU_synth_EcTruA"/>
    <property type="match status" value="1"/>
</dbReference>
<dbReference type="FunFam" id="3.30.70.580:FF:000001">
    <property type="entry name" value="tRNA pseudouridine synthase A"/>
    <property type="match status" value="1"/>
</dbReference>
<dbReference type="Gene3D" id="3.30.70.660">
    <property type="entry name" value="Pseudouridine synthase I, catalytic domain, C-terminal subdomain"/>
    <property type="match status" value="1"/>
</dbReference>
<dbReference type="Gene3D" id="3.30.70.580">
    <property type="entry name" value="Pseudouridine synthase I, catalytic domain, N-terminal subdomain"/>
    <property type="match status" value="1"/>
</dbReference>
<dbReference type="HAMAP" id="MF_00171">
    <property type="entry name" value="TruA"/>
    <property type="match status" value="1"/>
</dbReference>
<dbReference type="InterPro" id="IPR020103">
    <property type="entry name" value="PsdUridine_synth_cat_dom_sf"/>
</dbReference>
<dbReference type="InterPro" id="IPR001406">
    <property type="entry name" value="PsdUridine_synth_TruA"/>
</dbReference>
<dbReference type="InterPro" id="IPR020097">
    <property type="entry name" value="PsdUridine_synth_TruA_a/b_dom"/>
</dbReference>
<dbReference type="InterPro" id="IPR020095">
    <property type="entry name" value="PsdUridine_synth_TruA_C"/>
</dbReference>
<dbReference type="InterPro" id="IPR020094">
    <property type="entry name" value="TruA/RsuA/RluB/E/F_N"/>
</dbReference>
<dbReference type="NCBIfam" id="TIGR00071">
    <property type="entry name" value="hisT_truA"/>
    <property type="match status" value="1"/>
</dbReference>
<dbReference type="PANTHER" id="PTHR11142">
    <property type="entry name" value="PSEUDOURIDYLATE SYNTHASE"/>
    <property type="match status" value="1"/>
</dbReference>
<dbReference type="PANTHER" id="PTHR11142:SF0">
    <property type="entry name" value="TRNA PSEUDOURIDINE SYNTHASE-LIKE 1"/>
    <property type="match status" value="1"/>
</dbReference>
<dbReference type="Pfam" id="PF01416">
    <property type="entry name" value="PseudoU_synth_1"/>
    <property type="match status" value="2"/>
</dbReference>
<dbReference type="PIRSF" id="PIRSF001430">
    <property type="entry name" value="tRNA_psdUrid_synth"/>
    <property type="match status" value="1"/>
</dbReference>
<dbReference type="SUPFAM" id="SSF55120">
    <property type="entry name" value="Pseudouridine synthase"/>
    <property type="match status" value="1"/>
</dbReference>
<evidence type="ECO:0000255" key="1">
    <source>
        <dbReference type="HAMAP-Rule" id="MF_00171"/>
    </source>
</evidence>
<feature type="chain" id="PRO_0000057386" description="tRNA pseudouridine synthase A">
    <location>
        <begin position="1"/>
        <end position="275"/>
    </location>
</feature>
<feature type="active site" description="Nucleophile" evidence="1">
    <location>
        <position position="72"/>
    </location>
</feature>
<feature type="binding site" evidence="1">
    <location>
        <position position="133"/>
    </location>
    <ligand>
        <name>substrate</name>
    </ligand>
</feature>
<sequence>MSDTQAAEPLAEPAAEPTGLNRWALRIEYDGTGYLGWQKQNDGTSIQGLIEAAASKLVRNRPVPSITAGRTDAGVHAAGMVIHLDFPDDAPIDARQIRDGMGYHLKPHRVVVLETAKVGPEWNARFSATWRSYRYTILNRPARPGLMENRVWHIKRPLDVDLMQQAANHLLGPHDFTSFRAVACQARSPIRTLDVLNIHRDGELVMIDTKARSFLHHQVRNMAGTLMMIGSRQWPVEKIIEILEAKDRCAAGQTAPPEGLCLMDVGYPDDPFNRS</sequence>
<reference key="1">
    <citation type="journal article" date="2005" name="Nat. Biotechnol.">
        <title>Complete genome sequence of the acetic acid bacterium Gluconobacter oxydans.</title>
        <authorList>
            <person name="Prust C."/>
            <person name="Hoffmeister M."/>
            <person name="Liesegang H."/>
            <person name="Wiezer A."/>
            <person name="Fricke W.F."/>
            <person name="Ehrenreich A."/>
            <person name="Gottschalk G."/>
            <person name="Deppenmeier U."/>
        </authorList>
    </citation>
    <scope>NUCLEOTIDE SEQUENCE [LARGE SCALE GENOMIC DNA]</scope>
    <source>
        <strain>621H</strain>
    </source>
</reference>
<keyword id="KW-0413">Isomerase</keyword>
<keyword id="KW-1185">Reference proteome</keyword>
<keyword id="KW-0819">tRNA processing</keyword>
<organism>
    <name type="scientific">Gluconobacter oxydans (strain 621H)</name>
    <name type="common">Gluconobacter suboxydans</name>
    <dbReference type="NCBI Taxonomy" id="290633"/>
    <lineage>
        <taxon>Bacteria</taxon>
        <taxon>Pseudomonadati</taxon>
        <taxon>Pseudomonadota</taxon>
        <taxon>Alphaproteobacteria</taxon>
        <taxon>Acetobacterales</taxon>
        <taxon>Acetobacteraceae</taxon>
        <taxon>Gluconobacter</taxon>
    </lineage>
</organism>